<keyword id="KW-0067">ATP-binding</keyword>
<keyword id="KW-0436">Ligase</keyword>
<keyword id="KW-0479">Metal-binding</keyword>
<keyword id="KW-0547">Nucleotide-binding</keyword>
<keyword id="KW-0671">Queuosine biosynthesis</keyword>
<keyword id="KW-1185">Reference proteome</keyword>
<keyword id="KW-0862">Zinc</keyword>
<sequence length="221" mass="24018">MTGKKAVVILSGGLDSTTCMGVGKEAGYELYPISFHYGQRHDREIENAKKVASYFNVTEHKVFSLEFLKEIGGSSLTDQSMEVSQEGVGEDVPNTYVPGRNTIFLSIAASYAEAIGAEKIYVGVSAVDYSGYPDCRPEFIEAMQQTIYQGTNANPAMTIEAPLIDLSKGDTVKLGMKLNVPYHLTTSCYLGGEEACGECDSCRLRLQGFEEAGATDPIKYM</sequence>
<gene>
    <name evidence="1" type="primary">queC</name>
    <name type="ordered locus">OB0312</name>
</gene>
<name>QUEC_OCEIH</name>
<dbReference type="EC" id="6.3.4.20" evidence="1"/>
<dbReference type="EMBL" id="BA000028">
    <property type="protein sequence ID" value="BAC12268.1"/>
    <property type="molecule type" value="Genomic_DNA"/>
</dbReference>
<dbReference type="RefSeq" id="WP_011064715.1">
    <property type="nucleotide sequence ID" value="NC_004193.1"/>
</dbReference>
<dbReference type="SMR" id="Q8ETE9"/>
<dbReference type="STRING" id="221109.gene:10732515"/>
<dbReference type="KEGG" id="oih:OB0312"/>
<dbReference type="eggNOG" id="COG0603">
    <property type="taxonomic scope" value="Bacteria"/>
</dbReference>
<dbReference type="HOGENOM" id="CLU_081854_1_0_9"/>
<dbReference type="OrthoDB" id="9789567at2"/>
<dbReference type="PhylomeDB" id="Q8ETE9"/>
<dbReference type="UniPathway" id="UPA00391"/>
<dbReference type="Proteomes" id="UP000000822">
    <property type="component" value="Chromosome"/>
</dbReference>
<dbReference type="GO" id="GO:0005524">
    <property type="term" value="F:ATP binding"/>
    <property type="evidence" value="ECO:0007669"/>
    <property type="project" value="UniProtKB-UniRule"/>
</dbReference>
<dbReference type="GO" id="GO:0016879">
    <property type="term" value="F:ligase activity, forming carbon-nitrogen bonds"/>
    <property type="evidence" value="ECO:0007669"/>
    <property type="project" value="UniProtKB-UniRule"/>
</dbReference>
<dbReference type="GO" id="GO:0008270">
    <property type="term" value="F:zinc ion binding"/>
    <property type="evidence" value="ECO:0007669"/>
    <property type="project" value="UniProtKB-UniRule"/>
</dbReference>
<dbReference type="GO" id="GO:0008616">
    <property type="term" value="P:queuosine biosynthetic process"/>
    <property type="evidence" value="ECO:0007669"/>
    <property type="project" value="UniProtKB-UniRule"/>
</dbReference>
<dbReference type="CDD" id="cd01995">
    <property type="entry name" value="QueC-like"/>
    <property type="match status" value="1"/>
</dbReference>
<dbReference type="Gene3D" id="3.40.50.620">
    <property type="entry name" value="HUPs"/>
    <property type="match status" value="1"/>
</dbReference>
<dbReference type="HAMAP" id="MF_01633">
    <property type="entry name" value="QueC"/>
    <property type="match status" value="1"/>
</dbReference>
<dbReference type="InterPro" id="IPR018317">
    <property type="entry name" value="QueC"/>
</dbReference>
<dbReference type="InterPro" id="IPR014729">
    <property type="entry name" value="Rossmann-like_a/b/a_fold"/>
</dbReference>
<dbReference type="NCBIfam" id="TIGR00364">
    <property type="entry name" value="7-cyano-7-deazaguanine synthase QueC"/>
    <property type="match status" value="1"/>
</dbReference>
<dbReference type="PANTHER" id="PTHR42914">
    <property type="entry name" value="7-CYANO-7-DEAZAGUANINE SYNTHASE"/>
    <property type="match status" value="1"/>
</dbReference>
<dbReference type="PANTHER" id="PTHR42914:SF1">
    <property type="entry name" value="7-CYANO-7-DEAZAGUANINE SYNTHASE"/>
    <property type="match status" value="1"/>
</dbReference>
<dbReference type="Pfam" id="PF06508">
    <property type="entry name" value="QueC"/>
    <property type="match status" value="1"/>
</dbReference>
<dbReference type="PIRSF" id="PIRSF006293">
    <property type="entry name" value="ExsB"/>
    <property type="match status" value="1"/>
</dbReference>
<dbReference type="SUPFAM" id="SSF52402">
    <property type="entry name" value="Adenine nucleotide alpha hydrolases-like"/>
    <property type="match status" value="1"/>
</dbReference>
<feature type="chain" id="PRO_0000246871" description="7-cyano-7-deazaguanine synthase">
    <location>
        <begin position="1"/>
        <end position="221"/>
    </location>
</feature>
<feature type="binding site" evidence="1">
    <location>
        <begin position="10"/>
        <end position="20"/>
    </location>
    <ligand>
        <name>ATP</name>
        <dbReference type="ChEBI" id="CHEBI:30616"/>
    </ligand>
</feature>
<feature type="binding site" evidence="1">
    <location>
        <position position="188"/>
    </location>
    <ligand>
        <name>Zn(2+)</name>
        <dbReference type="ChEBI" id="CHEBI:29105"/>
    </ligand>
</feature>
<feature type="binding site" evidence="1">
    <location>
        <position position="196"/>
    </location>
    <ligand>
        <name>Zn(2+)</name>
        <dbReference type="ChEBI" id="CHEBI:29105"/>
    </ligand>
</feature>
<feature type="binding site" evidence="1">
    <location>
        <position position="199"/>
    </location>
    <ligand>
        <name>Zn(2+)</name>
        <dbReference type="ChEBI" id="CHEBI:29105"/>
    </ligand>
</feature>
<feature type="binding site" evidence="1">
    <location>
        <position position="202"/>
    </location>
    <ligand>
        <name>Zn(2+)</name>
        <dbReference type="ChEBI" id="CHEBI:29105"/>
    </ligand>
</feature>
<protein>
    <recommendedName>
        <fullName evidence="1">7-cyano-7-deazaguanine synthase</fullName>
        <ecNumber evidence="1">6.3.4.20</ecNumber>
    </recommendedName>
    <alternativeName>
        <fullName evidence="1">7-cyano-7-carbaguanine synthase</fullName>
    </alternativeName>
    <alternativeName>
        <fullName evidence="1">PreQ(0) synthase</fullName>
    </alternativeName>
    <alternativeName>
        <fullName evidence="1">Queuosine biosynthesis protein QueC</fullName>
    </alternativeName>
</protein>
<reference key="1">
    <citation type="journal article" date="2002" name="Nucleic Acids Res.">
        <title>Genome sequence of Oceanobacillus iheyensis isolated from the Iheya Ridge and its unexpected adaptive capabilities to extreme environments.</title>
        <authorList>
            <person name="Takami H."/>
            <person name="Takaki Y."/>
            <person name="Uchiyama I."/>
        </authorList>
    </citation>
    <scope>NUCLEOTIDE SEQUENCE [LARGE SCALE GENOMIC DNA]</scope>
    <source>
        <strain>DSM 14371 / CIP 107618 / JCM 11309 / KCTC 3954 / HTE831</strain>
    </source>
</reference>
<organism>
    <name type="scientific">Oceanobacillus iheyensis (strain DSM 14371 / CIP 107618 / JCM 11309 / KCTC 3954 / HTE831)</name>
    <dbReference type="NCBI Taxonomy" id="221109"/>
    <lineage>
        <taxon>Bacteria</taxon>
        <taxon>Bacillati</taxon>
        <taxon>Bacillota</taxon>
        <taxon>Bacilli</taxon>
        <taxon>Bacillales</taxon>
        <taxon>Bacillaceae</taxon>
        <taxon>Oceanobacillus</taxon>
    </lineage>
</organism>
<accession>Q8ETE9</accession>
<proteinExistence type="inferred from homology"/>
<comment type="function">
    <text evidence="1">Catalyzes the ATP-dependent conversion of 7-carboxy-7-deazaguanine (CDG) to 7-cyano-7-deazaguanine (preQ(0)).</text>
</comment>
<comment type="catalytic activity">
    <reaction evidence="1">
        <text>7-carboxy-7-deazaguanine + NH4(+) + ATP = 7-cyano-7-deazaguanine + ADP + phosphate + H2O + H(+)</text>
        <dbReference type="Rhea" id="RHEA:27982"/>
        <dbReference type="ChEBI" id="CHEBI:15377"/>
        <dbReference type="ChEBI" id="CHEBI:15378"/>
        <dbReference type="ChEBI" id="CHEBI:28938"/>
        <dbReference type="ChEBI" id="CHEBI:30616"/>
        <dbReference type="ChEBI" id="CHEBI:43474"/>
        <dbReference type="ChEBI" id="CHEBI:45075"/>
        <dbReference type="ChEBI" id="CHEBI:61036"/>
        <dbReference type="ChEBI" id="CHEBI:456216"/>
        <dbReference type="EC" id="6.3.4.20"/>
    </reaction>
</comment>
<comment type="cofactor">
    <cofactor evidence="1">
        <name>Zn(2+)</name>
        <dbReference type="ChEBI" id="CHEBI:29105"/>
    </cofactor>
    <text evidence="1">Binds 1 zinc ion per subunit.</text>
</comment>
<comment type="pathway">
    <text evidence="1">Purine metabolism; 7-cyano-7-deazaguanine biosynthesis.</text>
</comment>
<comment type="subunit">
    <text evidence="1">Homodimer.</text>
</comment>
<comment type="similarity">
    <text evidence="1">Belongs to the QueC family.</text>
</comment>
<evidence type="ECO:0000255" key="1">
    <source>
        <dbReference type="HAMAP-Rule" id="MF_01633"/>
    </source>
</evidence>